<name>SFH1_YARLI</name>
<feature type="chain" id="PRO_0000205961" description="Chromatin structure-remodeling complex subunit SFH1">
    <location>
        <begin position="1"/>
        <end position="441"/>
    </location>
</feature>
<feature type="region of interest" description="Disordered" evidence="3">
    <location>
        <begin position="124"/>
        <end position="183"/>
    </location>
</feature>
<feature type="region of interest" description="Disordered" evidence="3">
    <location>
        <begin position="383"/>
        <end position="407"/>
    </location>
</feature>
<feature type="compositionally biased region" description="Acidic residues" evidence="3">
    <location>
        <begin position="124"/>
        <end position="137"/>
    </location>
</feature>
<feature type="compositionally biased region" description="Basic and acidic residues" evidence="3">
    <location>
        <begin position="138"/>
        <end position="147"/>
    </location>
</feature>
<feature type="compositionally biased region" description="Basic and acidic residues" evidence="3">
    <location>
        <begin position="155"/>
        <end position="166"/>
    </location>
</feature>
<protein>
    <recommendedName>
        <fullName>Chromatin structure-remodeling complex subunit SFH1</fullName>
    </recommendedName>
    <alternativeName>
        <fullName>RSC complex subunit SFH1</fullName>
    </alternativeName>
    <alternativeName>
        <fullName>SNF5 homolog 1</fullName>
    </alternativeName>
</protein>
<accession>Q6C9N2</accession>
<evidence type="ECO:0000250" key="1"/>
<evidence type="ECO:0000250" key="2">
    <source>
        <dbReference type="UniProtKB" id="Q9USM3"/>
    </source>
</evidence>
<evidence type="ECO:0000256" key="3">
    <source>
        <dbReference type="SAM" id="MobiDB-lite"/>
    </source>
</evidence>
<evidence type="ECO:0000305" key="4"/>
<keyword id="KW-0131">Cell cycle</keyword>
<keyword id="KW-0156">Chromatin regulator</keyword>
<keyword id="KW-0539">Nucleus</keyword>
<keyword id="KW-1185">Reference proteome</keyword>
<keyword id="KW-0804">Transcription</keyword>
<keyword id="KW-0805">Transcription regulation</keyword>
<sequence>MGEKPNRIGRANISYINHDHIFLPSFQPSYPSRQLHPLISSQNKVHSSIVHLPKVASPSSPETQQHSQAPLFITHIMSGLPQALASGFAARVREGGTTLYINTTPMLRSARHNTAVNYAEFEEDFDANDFEDDDDDDQSQRESRDGSEEAEGDEDGTKKEEQDKFAGLKAPLVSNEPKRAAPPVRPVMYPQEVLEELSQVKEPTLIPIRVAVENIDVFRVQDFFLWDADEKILTPEQFATLTCADLDVPIGYSAQMSAQIKKQLAEYTAAPALPKDVEVHVIVELAVTVDKIVYEDKFEWDLSGEYATPQEFARTVVQDLGLGQEFYPAITYQLYETLGKLQKAWLERSIPLDVDNRAAFGLEAGLRVDQDNLGESWVPRVEEMTPEEMQKREMERDRSSRRLKRESARMAEVPYVDLDSLYSRKRRRRFDEDSRSGSPMW</sequence>
<gene>
    <name type="primary">SFH1</name>
    <name type="ordered locus">YALI0D09779g</name>
</gene>
<reference key="1">
    <citation type="journal article" date="2004" name="Nature">
        <title>Genome evolution in yeasts.</title>
        <authorList>
            <person name="Dujon B."/>
            <person name="Sherman D."/>
            <person name="Fischer G."/>
            <person name="Durrens P."/>
            <person name="Casaregola S."/>
            <person name="Lafontaine I."/>
            <person name="de Montigny J."/>
            <person name="Marck C."/>
            <person name="Neuveglise C."/>
            <person name="Talla E."/>
            <person name="Goffard N."/>
            <person name="Frangeul L."/>
            <person name="Aigle M."/>
            <person name="Anthouard V."/>
            <person name="Babour A."/>
            <person name="Barbe V."/>
            <person name="Barnay S."/>
            <person name="Blanchin S."/>
            <person name="Beckerich J.-M."/>
            <person name="Beyne E."/>
            <person name="Bleykasten C."/>
            <person name="Boisrame A."/>
            <person name="Boyer J."/>
            <person name="Cattolico L."/>
            <person name="Confanioleri F."/>
            <person name="de Daruvar A."/>
            <person name="Despons L."/>
            <person name="Fabre E."/>
            <person name="Fairhead C."/>
            <person name="Ferry-Dumazet H."/>
            <person name="Groppi A."/>
            <person name="Hantraye F."/>
            <person name="Hennequin C."/>
            <person name="Jauniaux N."/>
            <person name="Joyet P."/>
            <person name="Kachouri R."/>
            <person name="Kerrest A."/>
            <person name="Koszul R."/>
            <person name="Lemaire M."/>
            <person name="Lesur I."/>
            <person name="Ma L."/>
            <person name="Muller H."/>
            <person name="Nicaud J.-M."/>
            <person name="Nikolski M."/>
            <person name="Oztas S."/>
            <person name="Ozier-Kalogeropoulos O."/>
            <person name="Pellenz S."/>
            <person name="Potier S."/>
            <person name="Richard G.-F."/>
            <person name="Straub M.-L."/>
            <person name="Suleau A."/>
            <person name="Swennen D."/>
            <person name="Tekaia F."/>
            <person name="Wesolowski-Louvel M."/>
            <person name="Westhof E."/>
            <person name="Wirth B."/>
            <person name="Zeniou-Meyer M."/>
            <person name="Zivanovic Y."/>
            <person name="Bolotin-Fukuhara M."/>
            <person name="Thierry A."/>
            <person name="Bouchier C."/>
            <person name="Caudron B."/>
            <person name="Scarpelli C."/>
            <person name="Gaillardin C."/>
            <person name="Weissenbach J."/>
            <person name="Wincker P."/>
            <person name="Souciet J.-L."/>
        </authorList>
    </citation>
    <scope>NUCLEOTIDE SEQUENCE [LARGE SCALE GENOMIC DNA]</scope>
    <source>
        <strain>CLIB 122 / E 150</strain>
    </source>
</reference>
<comment type="function">
    <text evidence="1">Part of the chromatin structure-remodeling complex (RSC) which is involved in transcription regulation and nucleosome positioning. RSC is responsible for the transfer of a histone octamer from a nucleosome core particle to naked DNA. The reaction requires ATP and involves an activated RSC-nucleosome intermediate. Remodeling reaction also involves DNA translocation, DNA twist and conformational change. As a reconfigurer of centromeric and flanking nucleosomes, RSC complex is required both for proper kinetochore function in chromosome segregation and, via a PKC1-dependent signaling pathway, for organization of the cellular cytoskeleton. This subunit is essential for mitotic growth and required for cell cycle progression (By similarity).</text>
</comment>
<comment type="subcellular location">
    <subcellularLocation>
        <location evidence="2">Nucleus</location>
    </subcellularLocation>
</comment>
<comment type="similarity">
    <text evidence="4">Belongs to the SNF5 family.</text>
</comment>
<proteinExistence type="inferred from homology"/>
<organism>
    <name type="scientific">Yarrowia lipolytica (strain CLIB 122 / E 150)</name>
    <name type="common">Yeast</name>
    <name type="synonym">Candida lipolytica</name>
    <dbReference type="NCBI Taxonomy" id="284591"/>
    <lineage>
        <taxon>Eukaryota</taxon>
        <taxon>Fungi</taxon>
        <taxon>Dikarya</taxon>
        <taxon>Ascomycota</taxon>
        <taxon>Saccharomycotina</taxon>
        <taxon>Dipodascomycetes</taxon>
        <taxon>Dipodascales</taxon>
        <taxon>Dipodascales incertae sedis</taxon>
        <taxon>Yarrowia</taxon>
    </lineage>
</organism>
<dbReference type="EMBL" id="CR382130">
    <property type="protein sequence ID" value="CAG80818.1"/>
    <property type="molecule type" value="Genomic_DNA"/>
</dbReference>
<dbReference type="RefSeq" id="XP_502630.1">
    <property type="nucleotide sequence ID" value="XM_502630.1"/>
</dbReference>
<dbReference type="SMR" id="Q6C9N2"/>
<dbReference type="FunCoup" id="Q6C9N2">
    <property type="interactions" value="214"/>
</dbReference>
<dbReference type="STRING" id="284591.Q6C9N2"/>
<dbReference type="EnsemblFungi" id="CAG80818">
    <property type="protein sequence ID" value="CAG80818"/>
    <property type="gene ID" value="YALI0_D09779g"/>
</dbReference>
<dbReference type="KEGG" id="yli:2910921"/>
<dbReference type="VEuPathDB" id="FungiDB:YALI0_D09779g"/>
<dbReference type="HOGENOM" id="CLU_014421_4_0_1"/>
<dbReference type="InParanoid" id="Q6C9N2"/>
<dbReference type="OMA" id="FAIMLCQ"/>
<dbReference type="OrthoDB" id="2558at4891"/>
<dbReference type="Proteomes" id="UP000001300">
    <property type="component" value="Chromosome D"/>
</dbReference>
<dbReference type="GO" id="GO:0000228">
    <property type="term" value="C:nuclear chromosome"/>
    <property type="evidence" value="ECO:0007669"/>
    <property type="project" value="InterPro"/>
</dbReference>
<dbReference type="GO" id="GO:0005634">
    <property type="term" value="C:nucleus"/>
    <property type="evidence" value="ECO:0000318"/>
    <property type="project" value="GO_Central"/>
</dbReference>
<dbReference type="GO" id="GO:0016586">
    <property type="term" value="C:RSC-type complex"/>
    <property type="evidence" value="ECO:0000318"/>
    <property type="project" value="GO_Central"/>
</dbReference>
<dbReference type="GO" id="GO:0003712">
    <property type="term" value="F:transcription coregulator activity"/>
    <property type="evidence" value="ECO:0000318"/>
    <property type="project" value="GO_Central"/>
</dbReference>
<dbReference type="GO" id="GO:0006338">
    <property type="term" value="P:chromatin remodeling"/>
    <property type="evidence" value="ECO:0000318"/>
    <property type="project" value="GO_Central"/>
</dbReference>
<dbReference type="GO" id="GO:0006357">
    <property type="term" value="P:regulation of transcription by RNA polymerase II"/>
    <property type="evidence" value="ECO:0000318"/>
    <property type="project" value="GO_Central"/>
</dbReference>
<dbReference type="InterPro" id="IPR006939">
    <property type="entry name" value="SNF5"/>
</dbReference>
<dbReference type="PANTHER" id="PTHR10019">
    <property type="entry name" value="SNF5"/>
    <property type="match status" value="1"/>
</dbReference>
<dbReference type="Pfam" id="PF04855">
    <property type="entry name" value="SNF5"/>
    <property type="match status" value="1"/>
</dbReference>